<feature type="chain" id="PRO_0000430801" description="Methanesulfonate monooxygenase hydroxylase subunit alpha">
    <location>
        <begin position="1"/>
        <end position="414"/>
    </location>
</feature>
<feature type="domain" description="Rieske" evidence="2">
    <location>
        <begin position="44"/>
        <end position="163"/>
    </location>
</feature>
<feature type="binding site" evidence="1">
    <location>
        <position position="86"/>
    </location>
    <ligand>
        <name>[2Fe-2S] cluster</name>
        <dbReference type="ChEBI" id="CHEBI:190135"/>
    </ligand>
</feature>
<feature type="binding site" evidence="1">
    <location>
        <position position="88"/>
    </location>
    <ligand>
        <name>[2Fe-2S] cluster</name>
        <dbReference type="ChEBI" id="CHEBI:190135"/>
    </ligand>
</feature>
<feature type="binding site" evidence="1">
    <location>
        <position position="115"/>
    </location>
    <ligand>
        <name>[2Fe-2S] cluster</name>
        <dbReference type="ChEBI" id="CHEBI:190135"/>
    </ligand>
</feature>
<feature type="binding site" evidence="1">
    <location>
        <position position="118"/>
    </location>
    <ligand>
        <name>[2Fe-2S] cluster</name>
        <dbReference type="ChEBI" id="CHEBI:190135"/>
    </ligand>
</feature>
<feature type="binding site" evidence="1">
    <location>
        <position position="225"/>
    </location>
    <ligand>
        <name>Fe cation</name>
        <dbReference type="ChEBI" id="CHEBI:24875"/>
    </ligand>
</feature>
<gene>
    <name evidence="7" type="primary">msmA</name>
</gene>
<dbReference type="EC" id="1.14.13.111" evidence="3 5 6"/>
<dbReference type="EMBL" id="AF091716">
    <property type="protein sequence ID" value="AAD26619.1"/>
    <property type="molecule type" value="Genomic_DNA"/>
</dbReference>
<dbReference type="SMR" id="Q9X404"/>
<dbReference type="KEGG" id="ag:AAD26619"/>
<dbReference type="BioCyc" id="MetaCyc:MONOMER-14211"/>
<dbReference type="BRENDA" id="1.14.13.111">
    <property type="organism ID" value="10320"/>
</dbReference>
<dbReference type="GO" id="GO:0005737">
    <property type="term" value="C:cytoplasm"/>
    <property type="evidence" value="ECO:0007669"/>
    <property type="project" value="UniProtKB-SubCell"/>
</dbReference>
<dbReference type="GO" id="GO:0051537">
    <property type="term" value="F:2 iron, 2 sulfur cluster binding"/>
    <property type="evidence" value="ECO:0007669"/>
    <property type="project" value="UniProtKB-KW"/>
</dbReference>
<dbReference type="GO" id="GO:0005506">
    <property type="term" value="F:iron ion binding"/>
    <property type="evidence" value="ECO:0007669"/>
    <property type="project" value="InterPro"/>
</dbReference>
<dbReference type="GO" id="GO:0018648">
    <property type="term" value="F:methanesulfonate monooxygenase activity"/>
    <property type="evidence" value="ECO:0007669"/>
    <property type="project" value="UniProtKB-EC"/>
</dbReference>
<dbReference type="CDD" id="cd00680">
    <property type="entry name" value="RHO_alpha_C"/>
    <property type="match status" value="1"/>
</dbReference>
<dbReference type="CDD" id="cd03469">
    <property type="entry name" value="Rieske_RO_Alpha_N"/>
    <property type="match status" value="1"/>
</dbReference>
<dbReference type="Gene3D" id="3.90.380.10">
    <property type="entry name" value="Naphthalene 1,2-dioxygenase Alpha Subunit, Chain A, domain 1"/>
    <property type="match status" value="1"/>
</dbReference>
<dbReference type="Gene3D" id="2.102.10.10">
    <property type="entry name" value="Rieske [2Fe-2S] iron-sulphur domain"/>
    <property type="match status" value="1"/>
</dbReference>
<dbReference type="InterPro" id="IPR017941">
    <property type="entry name" value="Rieske_2Fe-2S"/>
</dbReference>
<dbReference type="InterPro" id="IPR036922">
    <property type="entry name" value="Rieske_2Fe-2S_sf"/>
</dbReference>
<dbReference type="InterPro" id="IPR015879">
    <property type="entry name" value="Ring_hydroxy_dOase_asu_C_dom"/>
</dbReference>
<dbReference type="InterPro" id="IPR001663">
    <property type="entry name" value="Rng_hydr_dOase-A"/>
</dbReference>
<dbReference type="PANTHER" id="PTHR43756:SF1">
    <property type="entry name" value="3-PHENYLPROPIONATE_CINNAMIC ACID DIOXYGENASE SUBUNIT ALPHA"/>
    <property type="match status" value="1"/>
</dbReference>
<dbReference type="PANTHER" id="PTHR43756">
    <property type="entry name" value="CHOLINE MONOOXYGENASE, CHLOROPLASTIC"/>
    <property type="match status" value="1"/>
</dbReference>
<dbReference type="Pfam" id="PF00355">
    <property type="entry name" value="Rieske"/>
    <property type="match status" value="1"/>
</dbReference>
<dbReference type="Pfam" id="PF00848">
    <property type="entry name" value="Ring_hydroxyl_A"/>
    <property type="match status" value="1"/>
</dbReference>
<dbReference type="PRINTS" id="PR00090">
    <property type="entry name" value="RNGDIOXGNASE"/>
</dbReference>
<dbReference type="SUPFAM" id="SSF55961">
    <property type="entry name" value="Bet v1-like"/>
    <property type="match status" value="1"/>
</dbReference>
<dbReference type="SUPFAM" id="SSF50022">
    <property type="entry name" value="ISP domain"/>
    <property type="match status" value="1"/>
</dbReference>
<dbReference type="PROSITE" id="PS51296">
    <property type="entry name" value="RIESKE"/>
    <property type="match status" value="1"/>
</dbReference>
<protein>
    <recommendedName>
        <fullName evidence="10">Methanesulfonate monooxygenase hydroxylase subunit alpha</fullName>
        <ecNumber evidence="3 5 6">1.14.13.111</ecNumber>
    </recommendedName>
    <alternativeName>
        <fullName evidence="7">Methanesulfonic acid monooxygenase hydroxylase large subunit</fullName>
    </alternativeName>
    <alternativeName>
        <fullName evidence="8">Methanesulfonic acid monooxygenase hydroxylase subunit alpha</fullName>
        <shortName evidence="8">MSA monooxygenase hydroxylase subunit alpha</shortName>
        <shortName evidence="8">MSAMO hydroxylase subunit alpha</shortName>
    </alternativeName>
</protein>
<keyword id="KW-0001">2Fe-2S</keyword>
<keyword id="KW-0963">Cytoplasm</keyword>
<keyword id="KW-0903">Direct protein sequencing</keyword>
<keyword id="KW-0408">Iron</keyword>
<keyword id="KW-0411">Iron-sulfur</keyword>
<keyword id="KW-0479">Metal-binding</keyword>
<keyword id="KW-0503">Monooxygenase</keyword>
<keyword id="KW-0520">NAD</keyword>
<keyword id="KW-0560">Oxidoreductase</keyword>
<evidence type="ECO:0000250" key="1">
    <source>
        <dbReference type="UniProtKB" id="P0A110"/>
    </source>
</evidence>
<evidence type="ECO:0000255" key="2">
    <source>
        <dbReference type="PROSITE-ProRule" id="PRU00628"/>
    </source>
</evidence>
<evidence type="ECO:0000269" key="3">
    <source>
    </source>
</evidence>
<evidence type="ECO:0000269" key="4">
    <source>
    </source>
</evidence>
<evidence type="ECO:0000269" key="5">
    <source>
    </source>
</evidence>
<evidence type="ECO:0000269" key="6">
    <source>
    </source>
</evidence>
<evidence type="ECO:0000303" key="7">
    <source>
    </source>
</evidence>
<evidence type="ECO:0000303" key="8">
    <source>
    </source>
</evidence>
<evidence type="ECO:0000303" key="9">
    <source>
    </source>
</evidence>
<evidence type="ECO:0000305" key="10"/>
<evidence type="ECO:0000312" key="11">
    <source>
        <dbReference type="EMBL" id="AAD26619.1"/>
    </source>
</evidence>
<organism evidence="11">
    <name type="scientific">Methylosulfonomonas methylovora</name>
    <dbReference type="NCBI Taxonomy" id="50057"/>
    <lineage>
        <taxon>Bacteria</taxon>
        <taxon>Pseudomonadati</taxon>
        <taxon>Pseudomonadota</taxon>
        <taxon>Alphaproteobacteria</taxon>
        <taxon>Hyphomicrobiales</taxon>
        <taxon>Methylosulfonomonas</taxon>
    </lineage>
</organism>
<sequence>MPARNHTQWMATPPLQKGEWVDSRVYTDQEIFDEELEKIFKKAWVPFRHESELPKAYDFRTTSIANEPIIVTRGPDNEVRAFLNVCPHRGMLIERRPSGSLYEGQPSGNPKRMTCMFHAWQFDMKGNCVYISREKEGYQDRLPKESVGLRRLRCEVKFGGFVWVNLDDNPISLEDWAGEPFQCLRKTLEAEPMEVFHYHKAIVDTNYKLWHDTNCEFYHDFMHYHNRVTGFNDAYFARKNESFEHGHILVGTFEVNYDQYEGFESRAGLSFPHLPPNQWYMIDLFPGMNFNLRGSALRCDVVTPLGPNKVMIEFRGLGLKSDTPEERQTRINHHNSIWGPFGRNLHEDLIGVQGQGTTMRPGQESRRILHGRQENQTIHDENGMRHYYDKWGKWMNRMPSNPELPYNAPAIAAE</sequence>
<comment type="function">
    <text evidence="6">Methanesulfonate monooxygenase (MSAMO) mediates the primary degradation of methanesulfonic acid (MSA) to produce formaldehyd and inorganic sulfite by initial hydroxylation of the carbon atom prior to spontaneous cleavage of the unstable hydroxymethanesulfonic acid. MSAMO has a restricted substrate range that includes only the short-chain aliphatic sulfonates (methane- to butanesulfonate) and excludes all larger molecules, such as arylsulfonates and aromatic sulfonates. All MSAMO components are required for enzyme activity.</text>
</comment>
<comment type="catalytic activity">
    <reaction evidence="3 5 6">
        <text>methanesulfonate + NADH + O2 = sulfite + formaldehyde + NAD(+) + H2O</text>
        <dbReference type="Rhea" id="RHEA:26077"/>
        <dbReference type="ChEBI" id="CHEBI:15377"/>
        <dbReference type="ChEBI" id="CHEBI:15379"/>
        <dbReference type="ChEBI" id="CHEBI:16842"/>
        <dbReference type="ChEBI" id="CHEBI:17359"/>
        <dbReference type="ChEBI" id="CHEBI:25224"/>
        <dbReference type="ChEBI" id="CHEBI:57540"/>
        <dbReference type="ChEBI" id="CHEBI:57945"/>
        <dbReference type="EC" id="1.14.13.111"/>
    </reaction>
</comment>
<comment type="cofactor">
    <cofactor evidence="2 9">
        <name>[2Fe-2S] cluster</name>
        <dbReference type="ChEBI" id="CHEBI:190135"/>
    </cofactor>
    <text evidence="2 9">Binds 1 [2Fe-2S] cluster per subunit.</text>
</comment>
<comment type="cofactor">
    <cofactor evidence="8">
        <name>Fe cation</name>
        <dbReference type="ChEBI" id="CHEBI:24875"/>
    </cofactor>
</comment>
<comment type="activity regulation">
    <text evidence="6">MSAMO is inhibited by metal chelators (such as bathophenanthroline, bathocuprione, neocuprione, alpha-alpha-dipyridil and sodium EDTA) and by sodium azide, sodium arsenate and potassium cyanide.</text>
</comment>
<comment type="biophysicochemical properties">
    <kinetics>
        <KM evidence="6">48 uM for NADH</KM>
        <KM evidence="6">61.5 uM for ethane sulfonic acid</KM>
        <Vmax evidence="6">65.5 nmol/min/mg enzyme with NADH as substrate</Vmax>
        <Vmax evidence="6">38.7 nmol/min/mg enzyme with ethane sulfonic acid as substrate</Vmax>
        <text evidence="6">Cell-free extracts of MSA-grown strain M2 have been used. Vmax of a cytoplasmic fraction has shown to be lower as was that of a reconstituted enzyme from partially purified fractions which was increased by addition of FAD and Fe(2+).</text>
    </kinetics>
</comment>
<comment type="subunit">
    <text evidence="7 8">The MSA monooxygenase system consists of 4 proteins: the 2 subunits of the hydroxylase component (MsmA and MsmB), a ferredoxin (MsmC) and a ferredoxin reductase (MsmD). The hydroxylase component consists of a 3 alpha (MsmA) and 3 beta (MsmB) subunits.</text>
</comment>
<comment type="subcellular location">
    <subcellularLocation>
        <location evidence="3 6">Cytoplasm</location>
    </subcellularLocation>
</comment>
<comment type="induction">
    <text evidence="4">The msmABCD operon is induced by methanesulfonic acid (MSA).</text>
</comment>
<comment type="similarity">
    <text evidence="10">Belongs to the bacterial ring-hydroxylating dioxygenase alpha subunit family.</text>
</comment>
<name>MSMA_METHY</name>
<proteinExistence type="evidence at protein level"/>
<reference key="1">
    <citation type="journal article" date="1999" name="J. Bacteriol.">
        <title>Molecular analysis of a novel methanesulfonic acid monooxygenase from the methylotroph Methylosulfonomonas methylovora.</title>
        <authorList>
            <person name="de Marco P."/>
            <person name="Moradas-Ferreira P."/>
            <person name="Higgins T.P."/>
            <person name="McDonald I."/>
            <person name="Kenna E.M."/>
            <person name="Murrell J.C."/>
        </authorList>
    </citation>
    <scope>NUCLEOTIDE SEQUENCE [GENOMIC DNA]</scope>
    <scope>SUBUNIT</scope>
    <source>
        <strain evidence="11">M2</strain>
    </source>
</reference>
<reference key="2">
    <citation type="journal article" date="2006" name="Appl. Environ. Microbiol.">
        <title>Identification, mutagenesis, and transcriptional analysis of the methanesulfonate transport operon of Methylosulfonomonas methylovora.</title>
        <authorList>
            <person name="Jamshad M."/>
            <person name="De Marco P."/>
            <person name="Pacheco C.C."/>
            <person name="Hanczar T."/>
            <person name="Murrell J.C."/>
        </authorList>
    </citation>
    <scope>NUCLEOTIDE SEQUENCE [GENOMIC DNA]</scope>
    <scope>INDUCTION</scope>
    <source>
        <strain evidence="11">M2</strain>
    </source>
</reference>
<reference key="3">
    <citation type="journal article" date="2000" name="Eur. J. Biochem.">
        <title>Purification and partial characterization of the hydroxylase component of the methanesulfonic acid mono-oxygenase from methylosulfonomonas methylovora strain M2.</title>
        <authorList>
            <person name="Reichenbecher W."/>
            <person name="Murrell J.C."/>
        </authorList>
    </citation>
    <scope>PROTEIN SEQUENCE OF 1-21</scope>
    <scope>SUBUNIT</scope>
    <scope>CATALYTIC ACTIVITY</scope>
    <scope>SUBCELLULAR LOCATION</scope>
    <scope>COFACTOR</scope>
</reference>
<reference key="4">
    <citation type="journal article" date="2007" name="Protein Expr. Purif.">
        <title>Purification and crystallization of the hydroxylase component of the methanesulfonate monooxygenase from Methylosulfonomonas methylovora strain M2.</title>
        <authorList>
            <person name="Jamshad M."/>
            <person name="Murrell J.C."/>
            <person name="Fueloep V."/>
        </authorList>
    </citation>
    <scope>PROTEIN SEQUENCE OF 5-17; 25-38; 61-95; 108-112; 228-238; 331-365 AND 397-414</scope>
    <scope>CATALYTIC ACTIVITY</scope>
    <scope>COFACTOR</scope>
</reference>
<reference key="5">
    <citation type="journal article" date="1996" name="Microbiology">
        <title>Metabolism of methanesulfonic acid involves a multicomponent monooxygenase enzyme.</title>
        <authorList>
            <person name="Higgins T.P."/>
            <person name="Davey M."/>
            <person name="Trickett J."/>
            <person name="Kelly D.P."/>
            <person name="Murrell J.C."/>
        </authorList>
    </citation>
    <scope>FUNCTION</scope>
    <scope>CATALYTIC ACTIVITY</scope>
    <scope>INDUCTION</scope>
    <scope>ACTIVITY REGULATION</scope>
    <scope>SUBCELLULAR LOCATION</scope>
    <scope>BIOPHYSICOCHEMICAL PROPERTIES</scope>
</reference>
<accession>Q9X404</accession>